<feature type="chain" id="PRO_0000127197" description="Helix-loop-helix protein 1">
    <location>
        <begin position="1"/>
        <end position="133"/>
    </location>
</feature>
<feature type="domain" description="bHLH" evidence="1">
    <location>
        <begin position="75"/>
        <end position="127"/>
    </location>
</feature>
<feature type="region of interest" description="Disordered" evidence="2">
    <location>
        <begin position="1"/>
        <end position="79"/>
    </location>
</feature>
<feature type="compositionally biased region" description="Gly residues" evidence="2">
    <location>
        <begin position="25"/>
        <end position="45"/>
    </location>
</feature>
<feature type="compositionally biased region" description="Basic and acidic residues" evidence="2">
    <location>
        <begin position="52"/>
        <end position="65"/>
    </location>
</feature>
<feature type="compositionally biased region" description="Basic residues" evidence="2">
    <location>
        <begin position="66"/>
        <end position="79"/>
    </location>
</feature>
<organism>
    <name type="scientific">Homo sapiens</name>
    <name type="common">Human</name>
    <dbReference type="NCBI Taxonomy" id="9606"/>
    <lineage>
        <taxon>Eukaryota</taxon>
        <taxon>Metazoa</taxon>
        <taxon>Chordata</taxon>
        <taxon>Craniata</taxon>
        <taxon>Vertebrata</taxon>
        <taxon>Euteleostomi</taxon>
        <taxon>Mammalia</taxon>
        <taxon>Eutheria</taxon>
        <taxon>Euarchontoglires</taxon>
        <taxon>Primates</taxon>
        <taxon>Haplorrhini</taxon>
        <taxon>Catarrhini</taxon>
        <taxon>Hominidae</taxon>
        <taxon>Homo</taxon>
    </lineage>
</organism>
<name>HEN1_HUMAN</name>
<proteinExistence type="evidence at protein level"/>
<gene>
    <name type="primary">NHLH1</name>
    <name type="synonym">BHLHA35</name>
    <name type="synonym">HEN1</name>
</gene>
<evidence type="ECO:0000255" key="1">
    <source>
        <dbReference type="PROSITE-ProRule" id="PRU00981"/>
    </source>
</evidence>
<evidence type="ECO:0000256" key="2">
    <source>
        <dbReference type="SAM" id="MobiDB-lite"/>
    </source>
</evidence>
<sequence>MMLNSDTMELDLPPTHSETESGFSDCGGGAGPDGAGPGGPGGGQARGPEPGEPGRKDLQHLSREERRRRRRATAKYRTAHATRERIRVEAFNLAFAELRKLLPTLPPDKKLSKIEILRLAICYISYLNHVLDV</sequence>
<keyword id="KW-0217">Developmental protein</keyword>
<keyword id="KW-0221">Differentiation</keyword>
<keyword id="KW-0238">DNA-binding</keyword>
<keyword id="KW-0539">Nucleus</keyword>
<keyword id="KW-1185">Reference proteome</keyword>
<keyword id="KW-0804">Transcription</keyword>
<keyword id="KW-0805">Transcription regulation</keyword>
<protein>
    <recommendedName>
        <fullName>Helix-loop-helix protein 1</fullName>
        <shortName>HEN-1</shortName>
    </recommendedName>
    <alternativeName>
        <fullName>Class A basic helix-loop-helix protein 35</fullName>
        <shortName>bHLHa35</shortName>
    </alternativeName>
    <alternativeName>
        <fullName>Nescient helix loop helix 1</fullName>
        <shortName>NSCL-1</shortName>
    </alternativeName>
</protein>
<comment type="function">
    <text>May serve as DNA-binding protein and may be involved in the control of cell-type determination, possibly within the developing nervous system.</text>
</comment>
<comment type="subunit">
    <text>Efficient DNA binding requires dimerization with another bHLH protein.</text>
</comment>
<comment type="interaction">
    <interactant intactId="EBI-3930567">
        <id>Q02575</id>
    </interactant>
    <interactant intactId="EBI-357046">
        <id>Q99832</id>
        <label>CCT7</label>
    </interactant>
    <organismsDiffer>false</organismsDiffer>
    <experiments>3</experiments>
</comment>
<comment type="interaction">
    <interactant intactId="EBI-3930567">
        <id>Q02575</id>
    </interactant>
    <interactant intactId="EBI-10250303">
        <id>Q6IPU0</id>
        <label>CENPP</label>
    </interactant>
    <organismsDiffer>false</organismsDiffer>
    <experiments>3</experiments>
</comment>
<comment type="subcellular location">
    <subcellularLocation>
        <location evidence="1">Nucleus</location>
    </subcellularLocation>
</comment>
<dbReference type="EMBL" id="M97507">
    <property type="protein sequence ID" value="AAA58634.1"/>
    <property type="molecule type" value="Genomic_DNA"/>
</dbReference>
<dbReference type="EMBL" id="BC013789">
    <property type="protein sequence ID" value="AAH13789.1"/>
    <property type="molecule type" value="mRNA"/>
</dbReference>
<dbReference type="CCDS" id="CCDS1204.1"/>
<dbReference type="PIR" id="B46167">
    <property type="entry name" value="A45075"/>
</dbReference>
<dbReference type="RefSeq" id="NP_005589.1">
    <property type="nucleotide sequence ID" value="NM_005598.4"/>
</dbReference>
<dbReference type="SMR" id="Q02575"/>
<dbReference type="BioGRID" id="110872">
    <property type="interactions" value="85"/>
</dbReference>
<dbReference type="FunCoup" id="Q02575">
    <property type="interactions" value="291"/>
</dbReference>
<dbReference type="IntAct" id="Q02575">
    <property type="interactions" value="79"/>
</dbReference>
<dbReference type="STRING" id="9606.ENSP00000302189"/>
<dbReference type="GlyGen" id="Q02575">
    <property type="glycosylation" value="1 site, 1 O-linked glycan (1 site)"/>
</dbReference>
<dbReference type="iPTMnet" id="Q02575"/>
<dbReference type="PhosphoSitePlus" id="Q02575"/>
<dbReference type="BioMuta" id="NHLH1"/>
<dbReference type="DMDM" id="399885"/>
<dbReference type="PaxDb" id="9606-ENSP00000302189"/>
<dbReference type="PeptideAtlas" id="Q02575"/>
<dbReference type="Antibodypedia" id="34277">
    <property type="antibodies" value="148 antibodies from 24 providers"/>
</dbReference>
<dbReference type="DNASU" id="4807"/>
<dbReference type="Ensembl" id="ENST00000302101.6">
    <property type="protein sequence ID" value="ENSP00000302189.5"/>
    <property type="gene ID" value="ENSG00000171786.6"/>
</dbReference>
<dbReference type="GeneID" id="4807"/>
<dbReference type="KEGG" id="hsa:4807"/>
<dbReference type="MANE-Select" id="ENST00000302101.6">
    <property type="protein sequence ID" value="ENSP00000302189.5"/>
    <property type="RefSeq nucleotide sequence ID" value="NM_005598.4"/>
    <property type="RefSeq protein sequence ID" value="NP_005589.1"/>
</dbReference>
<dbReference type="AGR" id="HGNC:7817"/>
<dbReference type="CTD" id="4807"/>
<dbReference type="DisGeNET" id="4807"/>
<dbReference type="GeneCards" id="NHLH1"/>
<dbReference type="HGNC" id="HGNC:7817">
    <property type="gene designation" value="NHLH1"/>
</dbReference>
<dbReference type="HPA" id="ENSG00000171786">
    <property type="expression patterns" value="Tissue enhanced (brain)"/>
</dbReference>
<dbReference type="MIM" id="162360">
    <property type="type" value="gene"/>
</dbReference>
<dbReference type="neXtProt" id="NX_Q02575"/>
<dbReference type="OpenTargets" id="ENSG00000171786"/>
<dbReference type="PharmGKB" id="PA31619"/>
<dbReference type="VEuPathDB" id="HostDB:ENSG00000171786"/>
<dbReference type="eggNOG" id="KOG4029">
    <property type="taxonomic scope" value="Eukaryota"/>
</dbReference>
<dbReference type="GeneTree" id="ENSGT00940000162622"/>
<dbReference type="HOGENOM" id="CLU_148882_1_0_1"/>
<dbReference type="InParanoid" id="Q02575"/>
<dbReference type="OMA" id="CGQSRGP"/>
<dbReference type="PAN-GO" id="Q02575">
    <property type="GO annotations" value="3 GO annotations based on evolutionary models"/>
</dbReference>
<dbReference type="PhylomeDB" id="Q02575"/>
<dbReference type="PathwayCommons" id="Q02575"/>
<dbReference type="SignaLink" id="Q02575"/>
<dbReference type="SIGNOR" id="Q02575"/>
<dbReference type="BioGRID-ORCS" id="4807">
    <property type="hits" value="13 hits in 1175 CRISPR screens"/>
</dbReference>
<dbReference type="GeneWiki" id="NHLH1"/>
<dbReference type="GenomeRNAi" id="4807"/>
<dbReference type="Pharos" id="Q02575">
    <property type="development level" value="Tbio"/>
</dbReference>
<dbReference type="PRO" id="PR:Q02575"/>
<dbReference type="Proteomes" id="UP000005640">
    <property type="component" value="Chromosome 1"/>
</dbReference>
<dbReference type="RNAct" id="Q02575">
    <property type="molecule type" value="protein"/>
</dbReference>
<dbReference type="Bgee" id="ENSG00000171786">
    <property type="expression patterns" value="Expressed in ganglionic eminence and 91 other cell types or tissues"/>
</dbReference>
<dbReference type="ExpressionAtlas" id="Q02575">
    <property type="expression patterns" value="baseline and differential"/>
</dbReference>
<dbReference type="GO" id="GO:0000785">
    <property type="term" value="C:chromatin"/>
    <property type="evidence" value="ECO:0000247"/>
    <property type="project" value="NTNU_SB"/>
</dbReference>
<dbReference type="GO" id="GO:0005634">
    <property type="term" value="C:nucleus"/>
    <property type="evidence" value="ECO:0007669"/>
    <property type="project" value="UniProtKB-SubCell"/>
</dbReference>
<dbReference type="GO" id="GO:0001228">
    <property type="term" value="F:DNA-binding transcription activator activity, RNA polymerase II-specific"/>
    <property type="evidence" value="ECO:0000314"/>
    <property type="project" value="NTNU_SB"/>
</dbReference>
<dbReference type="GO" id="GO:0000981">
    <property type="term" value="F:DNA-binding transcription factor activity, RNA polymerase II-specific"/>
    <property type="evidence" value="ECO:0000247"/>
    <property type="project" value="NTNU_SB"/>
</dbReference>
<dbReference type="GO" id="GO:0046983">
    <property type="term" value="F:protein dimerization activity"/>
    <property type="evidence" value="ECO:0007669"/>
    <property type="project" value="InterPro"/>
</dbReference>
<dbReference type="GO" id="GO:0000978">
    <property type="term" value="F:RNA polymerase II cis-regulatory region sequence-specific DNA binding"/>
    <property type="evidence" value="ECO:0000318"/>
    <property type="project" value="GO_Central"/>
</dbReference>
<dbReference type="GO" id="GO:0000977">
    <property type="term" value="F:RNA polymerase II transcription regulatory region sequence-specific DNA binding"/>
    <property type="evidence" value="ECO:0000314"/>
    <property type="project" value="NTNU_SB"/>
</dbReference>
<dbReference type="GO" id="GO:1990837">
    <property type="term" value="F:sequence-specific double-stranded DNA binding"/>
    <property type="evidence" value="ECO:0000314"/>
    <property type="project" value="ARUK-UCL"/>
</dbReference>
<dbReference type="GO" id="GO:0030154">
    <property type="term" value="P:cell differentiation"/>
    <property type="evidence" value="ECO:0007669"/>
    <property type="project" value="UniProtKB-KW"/>
</dbReference>
<dbReference type="GO" id="GO:0007417">
    <property type="term" value="P:central nervous system development"/>
    <property type="evidence" value="ECO:0000304"/>
    <property type="project" value="ProtInc"/>
</dbReference>
<dbReference type="GO" id="GO:0045944">
    <property type="term" value="P:positive regulation of transcription by RNA polymerase II"/>
    <property type="evidence" value="ECO:0000314"/>
    <property type="project" value="NTNU_SB"/>
</dbReference>
<dbReference type="GO" id="GO:0006357">
    <property type="term" value="P:regulation of transcription by RNA polymerase II"/>
    <property type="evidence" value="ECO:0000318"/>
    <property type="project" value="GO_Central"/>
</dbReference>
<dbReference type="CDD" id="cd19701">
    <property type="entry name" value="bHLH_TS_HEN1"/>
    <property type="match status" value="1"/>
</dbReference>
<dbReference type="FunFam" id="4.10.280.10:FF:000027">
    <property type="entry name" value="Nescient helix-loop-helix 1"/>
    <property type="match status" value="1"/>
</dbReference>
<dbReference type="Gene3D" id="4.10.280.10">
    <property type="entry name" value="Helix-loop-helix DNA-binding domain"/>
    <property type="match status" value="1"/>
</dbReference>
<dbReference type="InterPro" id="IPR011598">
    <property type="entry name" value="bHLH_dom"/>
</dbReference>
<dbReference type="InterPro" id="IPR036638">
    <property type="entry name" value="HLH_DNA-bd_sf"/>
</dbReference>
<dbReference type="InterPro" id="IPR040238">
    <property type="entry name" value="TAL-like"/>
</dbReference>
<dbReference type="PANTHER" id="PTHR13864:SF20">
    <property type="entry name" value="HELIX-LOOP-HELIX PROTEIN 1"/>
    <property type="match status" value="1"/>
</dbReference>
<dbReference type="PANTHER" id="PTHR13864">
    <property type="entry name" value="T-CELL ACUTE LYMPHOCYTIC LEUKEMIA/STEM CELL LEUKEMIA-RELATED"/>
    <property type="match status" value="1"/>
</dbReference>
<dbReference type="Pfam" id="PF00010">
    <property type="entry name" value="HLH"/>
    <property type="match status" value="1"/>
</dbReference>
<dbReference type="SMART" id="SM00353">
    <property type="entry name" value="HLH"/>
    <property type="match status" value="1"/>
</dbReference>
<dbReference type="SUPFAM" id="SSF47459">
    <property type="entry name" value="HLH, helix-loop-helix DNA-binding domain"/>
    <property type="match status" value="1"/>
</dbReference>
<dbReference type="PROSITE" id="PS50888">
    <property type="entry name" value="BHLH"/>
    <property type="match status" value="1"/>
</dbReference>
<reference key="1">
    <citation type="journal article" date="1992" name="Proc. Natl. Acad. Sci. U.S.A.">
        <title>HEN1 and HEN2: a subgroup of basic helix-loop-helix genes that are coexpressed in a human neuroblastoma.</title>
        <authorList>
            <person name="Brown L."/>
            <person name="Espinosa R. III"/>
            <person name="le Beau M.M."/>
            <person name="Siciliano M.J."/>
            <person name="Baer R."/>
        </authorList>
    </citation>
    <scope>NUCLEOTIDE SEQUENCE [GENOMIC DNA]</scope>
    <source>
        <tissue>Brain</tissue>
    </source>
</reference>
<reference key="2">
    <citation type="journal article" date="1992" name="J. Biol. Chem.">
        <title>A comparative structural characterization of the human NSCL-1 and NSCL-2 genes. Two basic helix-loop-helix genes expressed in the developing nervous system.</title>
        <authorList>
            <person name="Lipkowitz S."/>
            <person name="Gobel V."/>
            <person name="Varterasian M.L."/>
            <person name="Nakahara K."/>
            <person name="Tchorz K."/>
            <person name="Kirsch I.R."/>
        </authorList>
    </citation>
    <scope>NUCLEOTIDE SEQUENCE [GENOMIC DNA / MRNA]</scope>
    <source>
        <tissue>Brain</tissue>
    </source>
</reference>
<reference key="3">
    <citation type="journal article" date="2004" name="Genome Res.">
        <title>The status, quality, and expansion of the NIH full-length cDNA project: the Mammalian Gene Collection (MGC).</title>
        <authorList>
            <consortium name="The MGC Project Team"/>
        </authorList>
    </citation>
    <scope>NUCLEOTIDE SEQUENCE [LARGE SCALE MRNA]</scope>
    <source>
        <tissue>Eye</tissue>
    </source>
</reference>
<accession>Q02575</accession>